<keyword id="KW-1185">Reference proteome</keyword>
<organism>
    <name type="scientific">Haemophilus influenzae (strain ATCC 51907 / DSM 11121 / KW20 / Rd)</name>
    <dbReference type="NCBI Taxonomy" id="71421"/>
    <lineage>
        <taxon>Bacteria</taxon>
        <taxon>Pseudomonadati</taxon>
        <taxon>Pseudomonadota</taxon>
        <taxon>Gammaproteobacteria</taxon>
        <taxon>Pasteurellales</taxon>
        <taxon>Pasteurellaceae</taxon>
        <taxon>Haemophilus</taxon>
    </lineage>
</organism>
<protein>
    <recommendedName>
        <fullName>Uncharacterized protein HI_0841</fullName>
    </recommendedName>
</protein>
<reference key="1">
    <citation type="journal article" date="1995" name="Science">
        <title>Whole-genome random sequencing and assembly of Haemophilus influenzae Rd.</title>
        <authorList>
            <person name="Fleischmann R.D."/>
            <person name="Adams M.D."/>
            <person name="White O."/>
            <person name="Clayton R.A."/>
            <person name="Kirkness E.F."/>
            <person name="Kerlavage A.R."/>
            <person name="Bult C.J."/>
            <person name="Tomb J.-F."/>
            <person name="Dougherty B.A."/>
            <person name="Merrick J.M."/>
            <person name="McKenney K."/>
            <person name="Sutton G.G."/>
            <person name="FitzHugh W."/>
            <person name="Fields C.A."/>
            <person name="Gocayne J.D."/>
            <person name="Scott J.D."/>
            <person name="Shirley R."/>
            <person name="Liu L.-I."/>
            <person name="Glodek A."/>
            <person name="Kelley J.M."/>
            <person name="Weidman J.F."/>
            <person name="Phillips C.A."/>
            <person name="Spriggs T."/>
            <person name="Hedblom E."/>
            <person name="Cotton M.D."/>
            <person name="Utterback T.R."/>
            <person name="Hanna M.C."/>
            <person name="Nguyen D.T."/>
            <person name="Saudek D.M."/>
            <person name="Brandon R.C."/>
            <person name="Fine L.D."/>
            <person name="Fritchman J.L."/>
            <person name="Fuhrmann J.L."/>
            <person name="Geoghagen N.S.M."/>
            <person name="Gnehm C.L."/>
            <person name="McDonald L.A."/>
            <person name="Small K.V."/>
            <person name="Fraser C.M."/>
            <person name="Smith H.O."/>
            <person name="Venter J.C."/>
        </authorList>
    </citation>
    <scope>NUCLEOTIDE SEQUENCE [LARGE SCALE GENOMIC DNA]</scope>
    <source>
        <strain>ATCC 51907 / DSM 11121 / KW20 / Rd</strain>
    </source>
</reference>
<dbReference type="EMBL" id="L42023">
    <property type="protein sequence ID" value="AAC22500.1"/>
    <property type="molecule type" value="Genomic_DNA"/>
</dbReference>
<dbReference type="PIR" id="F64159">
    <property type="entry name" value="F64159"/>
</dbReference>
<dbReference type="RefSeq" id="NP_439001.1">
    <property type="nucleotide sequence ID" value="NC_000907.1"/>
</dbReference>
<dbReference type="SMR" id="P44898"/>
<dbReference type="STRING" id="71421.HI_0841"/>
<dbReference type="EnsemblBacteria" id="AAC22500">
    <property type="protein sequence ID" value="AAC22500"/>
    <property type="gene ID" value="HI_0841"/>
</dbReference>
<dbReference type="KEGG" id="hin:HI_0841"/>
<dbReference type="PATRIC" id="fig|71421.8.peg.882"/>
<dbReference type="eggNOG" id="COG3083">
    <property type="taxonomic scope" value="Bacteria"/>
</dbReference>
<dbReference type="HOGENOM" id="CLU_030247_1_0_6"/>
<dbReference type="OrthoDB" id="236686at2"/>
<dbReference type="PhylomeDB" id="P44898"/>
<dbReference type="BioCyc" id="HINF71421:G1GJ1-882-MONOMER"/>
<dbReference type="Proteomes" id="UP000000579">
    <property type="component" value="Chromosome"/>
</dbReference>
<dbReference type="GO" id="GO:0005886">
    <property type="term" value="C:plasma membrane"/>
    <property type="evidence" value="ECO:0000318"/>
    <property type="project" value="GO_Central"/>
</dbReference>
<dbReference type="Gene3D" id="3.40.720.10">
    <property type="entry name" value="Alkaline Phosphatase, subunit A"/>
    <property type="match status" value="2"/>
</dbReference>
<dbReference type="InterPro" id="IPR017850">
    <property type="entry name" value="Alkaline_phosphatase_core_sf"/>
</dbReference>
<dbReference type="InterPro" id="IPR000917">
    <property type="entry name" value="Sulfatase_N"/>
</dbReference>
<dbReference type="InterPro" id="IPR012159">
    <property type="entry name" value="YejM-like"/>
</dbReference>
<dbReference type="InterPro" id="IPR024588">
    <property type="entry name" value="YejM_N"/>
</dbReference>
<dbReference type="PANTHER" id="PTHR43108:SF10">
    <property type="entry name" value="INNER MEMBRANE PROTEIN YEJM"/>
    <property type="match status" value="1"/>
</dbReference>
<dbReference type="PANTHER" id="PTHR43108">
    <property type="entry name" value="N-ACETYLGLUCOSAMINE-6-SULFATASE FAMILY MEMBER"/>
    <property type="match status" value="1"/>
</dbReference>
<dbReference type="Pfam" id="PF11893">
    <property type="entry name" value="DUF3413"/>
    <property type="match status" value="1"/>
</dbReference>
<dbReference type="Pfam" id="PF00884">
    <property type="entry name" value="Sulfatase"/>
    <property type="match status" value="2"/>
</dbReference>
<dbReference type="PIRSF" id="PIRSF004950">
    <property type="entry name" value="Mmb_sulf_HI0842"/>
    <property type="match status" value="1"/>
</dbReference>
<dbReference type="SUPFAM" id="SSF53649">
    <property type="entry name" value="Alkaline phosphatase-like"/>
    <property type="match status" value="1"/>
</dbReference>
<comment type="similarity">
    <text evidence="1">To E.coli YejM.</text>
</comment>
<feature type="chain" id="PRO_0000169170" description="Uncharacterized protein HI_0841">
    <location>
        <begin position="1"/>
        <end position="585"/>
    </location>
</feature>
<proteinExistence type="predicted"/>
<gene>
    <name type="ordered locus">HI_0841</name>
</gene>
<accession>P44898</accession>
<evidence type="ECO:0000305" key="1"/>
<sequence>MKWIKKGTFSGKQYRDDVSRKISWGHWFAFFNIIVAIFIGARYAFIIDWPDTLAGKLYFFVSLLGHFSFNVFALYLLVVFPLSFIVKNHRTFRGLTVIFSTICTTLLLFDTAVFNRFNLHLSSVVWNLLVNPENGEMSRDWQIFFAPMPIILLAQMLFSRWSWEKLRSLERQKWLKGTGIFLTTTFIATHLIYAWADAYLYRPITMQRSNFPLSYPMTARSFLEKHGFLDGEEYTQKLAQEGRLDALKIDYPKKELTYAPITHKPNILLVTVSGLRHDAISNEKMPKLAKFATSSTEFTNHYSTGNSNNAGLIGLFYGLNANYTDSILSNHTQSVLIEKLRAENYQLGLFSATNFKDSIFRQALFREIKLSSNKTNKPNNESAVKNLNDFIKAQKTDSPWFAYLDLALEAKNPSDYDRTLQDIDSLLAKALESTPLENTLVIITSEHGLTFNEMNQKERENYFGRDEIQVPLLVYWKDLPVGKQNGLSNHADIFSALMQTVFRVENPLMDYSQGRNLFDLKGDDWVLASNFRWNVVIQPDGTQYHIDRKGNYKKFDKDYIEQSSDRPPLGIFLEAFQLQNFFFEK</sequence>
<name>Y841_HAEIN</name>